<evidence type="ECO:0000255" key="1">
    <source>
        <dbReference type="HAMAP-Rule" id="MF_02115"/>
    </source>
</evidence>
<sequence>MKTVMATGTFDIIHPGHGFFLEEARKLGGEDARLVVVLARDSTVRARKRTPIVGEKQRLEVVRMLKPVDEAYLGSETDMFEIVHRIKPDIIAIGPDQKFDVDELRDELRRRGLGCEVRRIEKYRDAELDSTCKIIKRIRSMEFDEDSLKNC</sequence>
<reference key="1">
    <citation type="journal article" date="1997" name="J. Bacteriol.">
        <title>Complete genome sequence of Methanobacterium thermoautotrophicum deltaH: functional analysis and comparative genomics.</title>
        <authorList>
            <person name="Smith D.R."/>
            <person name="Doucette-Stamm L.A."/>
            <person name="Deloughery C."/>
            <person name="Lee H.-M."/>
            <person name="Dubois J."/>
            <person name="Aldredge T."/>
            <person name="Bashirzadeh R."/>
            <person name="Blakely D."/>
            <person name="Cook R."/>
            <person name="Gilbert K."/>
            <person name="Harrison D."/>
            <person name="Hoang L."/>
            <person name="Keagle P."/>
            <person name="Lumm W."/>
            <person name="Pothier B."/>
            <person name="Qiu D."/>
            <person name="Spadafora R."/>
            <person name="Vicare R."/>
            <person name="Wang Y."/>
            <person name="Wierzbowski J."/>
            <person name="Gibson R."/>
            <person name="Jiwani N."/>
            <person name="Caruso A."/>
            <person name="Bush D."/>
            <person name="Safer H."/>
            <person name="Patwell D."/>
            <person name="Prabhakar S."/>
            <person name="McDougall S."/>
            <person name="Shimer G."/>
            <person name="Goyal A."/>
            <person name="Pietrovski S."/>
            <person name="Church G.M."/>
            <person name="Daniels C.J."/>
            <person name="Mao J.-I."/>
            <person name="Rice P."/>
            <person name="Noelling J."/>
            <person name="Reeve J.N."/>
        </authorList>
    </citation>
    <scope>NUCLEOTIDE SEQUENCE [LARGE SCALE GENOMIC DNA]</scope>
    <source>
        <strain>ATCC 29096 / DSM 1053 / JCM 10044 / NBRC 100330 / Delta H</strain>
    </source>
</reference>
<name>RIBL_METTH</name>
<proteinExistence type="inferred from homology"/>
<feature type="chain" id="PRO_0000406244" description="FAD synthase">
    <location>
        <begin position="1"/>
        <end position="151"/>
    </location>
</feature>
<feature type="binding site" evidence="1">
    <location>
        <begin position="9"/>
        <end position="10"/>
    </location>
    <ligand>
        <name>ATP</name>
        <dbReference type="ChEBI" id="CHEBI:30616"/>
    </ligand>
</feature>
<feature type="binding site" evidence="1">
    <location>
        <begin position="14"/>
        <end position="17"/>
    </location>
    <ligand>
        <name>ATP</name>
        <dbReference type="ChEBI" id="CHEBI:30616"/>
    </ligand>
</feature>
<feature type="binding site" evidence="1">
    <location>
        <position position="96"/>
    </location>
    <ligand>
        <name>ATP</name>
        <dbReference type="ChEBI" id="CHEBI:30616"/>
    </ligand>
</feature>
<feature type="binding site" evidence="1">
    <location>
        <position position="123"/>
    </location>
    <ligand>
        <name>ATP</name>
        <dbReference type="ChEBI" id="CHEBI:30616"/>
    </ligand>
</feature>
<keyword id="KW-0067">ATP-binding</keyword>
<keyword id="KW-0274">FAD</keyword>
<keyword id="KW-0285">Flavoprotein</keyword>
<keyword id="KW-0288">FMN</keyword>
<keyword id="KW-0547">Nucleotide-binding</keyword>
<keyword id="KW-0548">Nucleotidyltransferase</keyword>
<keyword id="KW-1185">Reference proteome</keyword>
<keyword id="KW-0808">Transferase</keyword>
<organism>
    <name type="scientific">Methanothermobacter thermautotrophicus (strain ATCC 29096 / DSM 1053 / JCM 10044 / NBRC 100330 / Delta H)</name>
    <name type="common">Methanobacterium thermoautotrophicum</name>
    <dbReference type="NCBI Taxonomy" id="187420"/>
    <lineage>
        <taxon>Archaea</taxon>
        <taxon>Methanobacteriati</taxon>
        <taxon>Methanobacteriota</taxon>
        <taxon>Methanomada group</taxon>
        <taxon>Methanobacteria</taxon>
        <taxon>Methanobacteriales</taxon>
        <taxon>Methanobacteriaceae</taxon>
        <taxon>Methanothermobacter</taxon>
    </lineage>
</organism>
<protein>
    <recommendedName>
        <fullName evidence="1">FAD synthase</fullName>
        <ecNumber evidence="1">2.7.7.2</ecNumber>
    </recommendedName>
    <alternativeName>
        <fullName evidence="1">FMN adenylyltransferase</fullName>
    </alternativeName>
    <alternativeName>
        <fullName evidence="1">Flavin adenine dinucleotide synthase</fullName>
    </alternativeName>
</protein>
<dbReference type="EC" id="2.7.7.2" evidence="1"/>
<dbReference type="EMBL" id="AE000666">
    <property type="protein sequence ID" value="AAB85342.1"/>
    <property type="molecule type" value="Genomic_DNA"/>
</dbReference>
<dbReference type="PIR" id="F69212">
    <property type="entry name" value="F69212"/>
</dbReference>
<dbReference type="RefSeq" id="WP_010876477.1">
    <property type="nucleotide sequence ID" value="NC_000916.1"/>
</dbReference>
<dbReference type="SMR" id="O26932"/>
<dbReference type="FunCoup" id="O26932">
    <property type="interactions" value="12"/>
</dbReference>
<dbReference type="STRING" id="187420.MTH_844"/>
<dbReference type="PaxDb" id="187420-MTH_844"/>
<dbReference type="EnsemblBacteria" id="AAB85342">
    <property type="protein sequence ID" value="AAB85342"/>
    <property type="gene ID" value="MTH_844"/>
</dbReference>
<dbReference type="GeneID" id="1471252"/>
<dbReference type="KEGG" id="mth:MTH_844"/>
<dbReference type="PATRIC" id="fig|187420.15.peg.827"/>
<dbReference type="HOGENOM" id="CLU_034585_2_1_2"/>
<dbReference type="InParanoid" id="O26932"/>
<dbReference type="UniPathway" id="UPA00277">
    <property type="reaction ID" value="UER00407"/>
</dbReference>
<dbReference type="Proteomes" id="UP000005223">
    <property type="component" value="Chromosome"/>
</dbReference>
<dbReference type="GO" id="GO:0005524">
    <property type="term" value="F:ATP binding"/>
    <property type="evidence" value="ECO:0007669"/>
    <property type="project" value="UniProtKB-UniRule"/>
</dbReference>
<dbReference type="GO" id="GO:0003919">
    <property type="term" value="F:FMN adenylyltransferase activity"/>
    <property type="evidence" value="ECO:0007669"/>
    <property type="project" value="UniProtKB-UniRule"/>
</dbReference>
<dbReference type="GO" id="GO:0006747">
    <property type="term" value="P:FAD biosynthetic process"/>
    <property type="evidence" value="ECO:0007669"/>
    <property type="project" value="UniProtKB-UniRule"/>
</dbReference>
<dbReference type="GO" id="GO:0046444">
    <property type="term" value="P:FMN metabolic process"/>
    <property type="evidence" value="ECO:0007669"/>
    <property type="project" value="UniProtKB-UniRule"/>
</dbReference>
<dbReference type="CDD" id="cd02170">
    <property type="entry name" value="cytidylyltransferase"/>
    <property type="match status" value="1"/>
</dbReference>
<dbReference type="Gene3D" id="3.40.50.620">
    <property type="entry name" value="HUPs"/>
    <property type="match status" value="1"/>
</dbReference>
<dbReference type="HAMAP" id="MF_02115">
    <property type="entry name" value="FAD_synth_arch"/>
    <property type="match status" value="1"/>
</dbReference>
<dbReference type="InterPro" id="IPR050385">
    <property type="entry name" value="Archaeal_FAD_synthase"/>
</dbReference>
<dbReference type="InterPro" id="IPR004821">
    <property type="entry name" value="Cyt_trans-like"/>
</dbReference>
<dbReference type="InterPro" id="IPR024902">
    <property type="entry name" value="FAD_synth_RibL"/>
</dbReference>
<dbReference type="InterPro" id="IPR014729">
    <property type="entry name" value="Rossmann-like_a/b/a_fold"/>
</dbReference>
<dbReference type="NCBIfam" id="TIGR00125">
    <property type="entry name" value="cyt_tran_rel"/>
    <property type="match status" value="1"/>
</dbReference>
<dbReference type="PANTHER" id="PTHR43793">
    <property type="entry name" value="FAD SYNTHASE"/>
    <property type="match status" value="1"/>
</dbReference>
<dbReference type="PANTHER" id="PTHR43793:SF1">
    <property type="entry name" value="FAD SYNTHASE"/>
    <property type="match status" value="1"/>
</dbReference>
<dbReference type="Pfam" id="PF01467">
    <property type="entry name" value="CTP_transf_like"/>
    <property type="match status" value="1"/>
</dbReference>
<dbReference type="SUPFAM" id="SSF52374">
    <property type="entry name" value="Nucleotidylyl transferase"/>
    <property type="match status" value="1"/>
</dbReference>
<accession>O26932</accession>
<gene>
    <name evidence="1" type="primary">ribL</name>
    <name type="ordered locus">MTH_844</name>
</gene>
<comment type="function">
    <text evidence="1">Catalyzes the transfer of the AMP portion of ATP to flavin mononucleotide (FMN) to produce flavin adenine dinucleotide (FAD) coenzyme.</text>
</comment>
<comment type="catalytic activity">
    <reaction evidence="1">
        <text>FMN + ATP + H(+) = FAD + diphosphate</text>
        <dbReference type="Rhea" id="RHEA:17237"/>
        <dbReference type="ChEBI" id="CHEBI:15378"/>
        <dbReference type="ChEBI" id="CHEBI:30616"/>
        <dbReference type="ChEBI" id="CHEBI:33019"/>
        <dbReference type="ChEBI" id="CHEBI:57692"/>
        <dbReference type="ChEBI" id="CHEBI:58210"/>
        <dbReference type="EC" id="2.7.7.2"/>
    </reaction>
</comment>
<comment type="cofactor">
    <cofactor evidence="1">
        <name>a divalent metal cation</name>
        <dbReference type="ChEBI" id="CHEBI:60240"/>
    </cofactor>
</comment>
<comment type="pathway">
    <text evidence="1">Cofactor biosynthesis; FAD biosynthesis; FAD from FMN: step 1/1.</text>
</comment>
<comment type="subunit">
    <text evidence="1">Homodimer.</text>
</comment>
<comment type="similarity">
    <text evidence="1">Belongs to the archaeal FAD synthase family.</text>
</comment>